<proteinExistence type="inferred from homology"/>
<name>SECG_GUITH</name>
<accession>O78500</accession>
<protein>
    <recommendedName>
        <fullName>Probable protein-export membrane protein secG</fullName>
    </recommendedName>
</protein>
<geneLocation type="chloroplast"/>
<feature type="chain" id="PRO_0000217368" description="Probable protein-export membrane protein secG">
    <location>
        <begin position="1"/>
        <end position="68"/>
    </location>
</feature>
<feature type="transmembrane region" description="Helical" evidence="1">
    <location>
        <begin position="1"/>
        <end position="21"/>
    </location>
</feature>
<feature type="transmembrane region" description="Helical" evidence="1">
    <location>
        <begin position="44"/>
        <end position="64"/>
    </location>
</feature>
<reference key="1">
    <citation type="journal article" date="1999" name="J. Mol. Evol.">
        <title>The plastid genome of the cryptophyte alga, Guillardia theta: complete sequence and conserved synteny groups confirm its common ancestry with red algae.</title>
        <authorList>
            <person name="Douglas S.E."/>
            <person name="Penny S.L."/>
        </authorList>
    </citation>
    <scope>NUCLEOTIDE SEQUENCE [LARGE SCALE GENOMIC DNA]</scope>
</reference>
<evidence type="ECO:0000255" key="1"/>
<evidence type="ECO:0000305" key="2"/>
<gene>
    <name type="primary">secG</name>
    <name type="synonym">ycf47</name>
</gene>
<comment type="function">
    <text evidence="2">Involved in protein export. Participates in an early event of protein translocation across the chloroplast thylakoid membrane (Potential).</text>
</comment>
<comment type="subcellular location">
    <subcellularLocation>
        <location evidence="2">Plastid</location>
        <location evidence="2">Chloroplast thylakoid membrane</location>
        <topology evidence="2">Multi-pass membrane protein</topology>
    </subcellularLocation>
</comment>
<comment type="similarity">
    <text evidence="2">Belongs to the SecG family.</text>
</comment>
<organism>
    <name type="scientific">Guillardia theta</name>
    <name type="common">Cryptophyte</name>
    <name type="synonym">Cryptomonas phi</name>
    <dbReference type="NCBI Taxonomy" id="55529"/>
    <lineage>
        <taxon>Eukaryota</taxon>
        <taxon>Cryptophyceae</taxon>
        <taxon>Pyrenomonadales</taxon>
        <taxon>Geminigeraceae</taxon>
        <taxon>Guillardia</taxon>
    </lineage>
</organism>
<dbReference type="EMBL" id="AF041468">
    <property type="protein sequence ID" value="AAC35691.1"/>
    <property type="molecule type" value="Genomic_DNA"/>
</dbReference>
<dbReference type="RefSeq" id="NP_050757.1">
    <property type="nucleotide sequence ID" value="NC_000926.1"/>
</dbReference>
<dbReference type="SMR" id="O78500"/>
<dbReference type="GeneID" id="857062"/>
<dbReference type="HOGENOM" id="CLU_094156_7_2_1"/>
<dbReference type="GO" id="GO:0009535">
    <property type="term" value="C:chloroplast thylakoid membrane"/>
    <property type="evidence" value="ECO:0007669"/>
    <property type="project" value="UniProtKB-SubCell"/>
</dbReference>
<dbReference type="GO" id="GO:0015450">
    <property type="term" value="F:protein-transporting ATPase activity"/>
    <property type="evidence" value="ECO:0007669"/>
    <property type="project" value="InterPro"/>
</dbReference>
<dbReference type="GO" id="GO:0009306">
    <property type="term" value="P:protein secretion"/>
    <property type="evidence" value="ECO:0007669"/>
    <property type="project" value="InterPro"/>
</dbReference>
<dbReference type="InterPro" id="IPR004692">
    <property type="entry name" value="SecG"/>
</dbReference>
<dbReference type="NCBIfam" id="TIGR00810">
    <property type="entry name" value="secG"/>
    <property type="match status" value="1"/>
</dbReference>
<dbReference type="Pfam" id="PF03840">
    <property type="entry name" value="SecG"/>
    <property type="match status" value="1"/>
</dbReference>
<keyword id="KW-0150">Chloroplast</keyword>
<keyword id="KW-0472">Membrane</keyword>
<keyword id="KW-0934">Plastid</keyword>
<keyword id="KW-0653">Protein transport</keyword>
<keyword id="KW-0793">Thylakoid</keyword>
<keyword id="KW-0811">Translocation</keyword>
<keyword id="KW-0812">Transmembrane</keyword>
<keyword id="KW-1133">Transmembrane helix</keyword>
<keyword id="KW-0813">Transport</keyword>
<sequence>MLNIIWLITGILLLFAIMIHNPKSQGFGTQNQIFGSTRSAEQTLNKATWFLILLFFILTVVLSINNEF</sequence>